<feature type="chain" id="PRO_1000129197" description="Succinate--CoA ligase [ADP-forming] subunit beta">
    <location>
        <begin position="1"/>
        <end position="388"/>
    </location>
</feature>
<feature type="domain" description="ATP-grasp" evidence="1">
    <location>
        <begin position="9"/>
        <end position="244"/>
    </location>
</feature>
<feature type="binding site" evidence="1">
    <location>
        <position position="46"/>
    </location>
    <ligand>
        <name>ATP</name>
        <dbReference type="ChEBI" id="CHEBI:30616"/>
    </ligand>
</feature>
<feature type="binding site" evidence="1">
    <location>
        <begin position="53"/>
        <end position="55"/>
    </location>
    <ligand>
        <name>ATP</name>
        <dbReference type="ChEBI" id="CHEBI:30616"/>
    </ligand>
</feature>
<feature type="binding site" evidence="1">
    <location>
        <position position="99"/>
    </location>
    <ligand>
        <name>ATP</name>
        <dbReference type="ChEBI" id="CHEBI:30616"/>
    </ligand>
</feature>
<feature type="binding site" evidence="1">
    <location>
        <position position="102"/>
    </location>
    <ligand>
        <name>ATP</name>
        <dbReference type="ChEBI" id="CHEBI:30616"/>
    </ligand>
</feature>
<feature type="binding site" evidence="1">
    <location>
        <position position="107"/>
    </location>
    <ligand>
        <name>ATP</name>
        <dbReference type="ChEBI" id="CHEBI:30616"/>
    </ligand>
</feature>
<feature type="binding site" evidence="1">
    <location>
        <position position="199"/>
    </location>
    <ligand>
        <name>Mg(2+)</name>
        <dbReference type="ChEBI" id="CHEBI:18420"/>
    </ligand>
</feature>
<feature type="binding site" evidence="1">
    <location>
        <position position="213"/>
    </location>
    <ligand>
        <name>Mg(2+)</name>
        <dbReference type="ChEBI" id="CHEBI:18420"/>
    </ligand>
</feature>
<feature type="binding site" evidence="1">
    <location>
        <position position="264"/>
    </location>
    <ligand>
        <name>substrate</name>
        <note>ligand shared with subunit alpha</note>
    </ligand>
</feature>
<feature type="binding site" evidence="1">
    <location>
        <begin position="321"/>
        <end position="323"/>
    </location>
    <ligand>
        <name>substrate</name>
        <note>ligand shared with subunit alpha</note>
    </ligand>
</feature>
<proteinExistence type="inferred from homology"/>
<gene>
    <name evidence="1" type="primary">sucC</name>
    <name type="ordered locus">KPK_3836</name>
</gene>
<reference key="1">
    <citation type="journal article" date="2008" name="PLoS Genet.">
        <title>Complete genome sequence of the N2-fixing broad host range endophyte Klebsiella pneumoniae 342 and virulence predictions verified in mice.</title>
        <authorList>
            <person name="Fouts D.E."/>
            <person name="Tyler H.L."/>
            <person name="DeBoy R.T."/>
            <person name="Daugherty S."/>
            <person name="Ren Q."/>
            <person name="Badger J.H."/>
            <person name="Durkin A.S."/>
            <person name="Huot H."/>
            <person name="Shrivastava S."/>
            <person name="Kothari S."/>
            <person name="Dodson R.J."/>
            <person name="Mohamoud Y."/>
            <person name="Khouri H."/>
            <person name="Roesch L.F.W."/>
            <person name="Krogfelt K.A."/>
            <person name="Struve C."/>
            <person name="Triplett E.W."/>
            <person name="Methe B.A."/>
        </authorList>
    </citation>
    <scope>NUCLEOTIDE SEQUENCE [LARGE SCALE GENOMIC DNA]</scope>
    <source>
        <strain>342</strain>
    </source>
</reference>
<organism>
    <name type="scientific">Klebsiella pneumoniae (strain 342)</name>
    <dbReference type="NCBI Taxonomy" id="507522"/>
    <lineage>
        <taxon>Bacteria</taxon>
        <taxon>Pseudomonadati</taxon>
        <taxon>Pseudomonadota</taxon>
        <taxon>Gammaproteobacteria</taxon>
        <taxon>Enterobacterales</taxon>
        <taxon>Enterobacteriaceae</taxon>
        <taxon>Klebsiella/Raoultella group</taxon>
        <taxon>Klebsiella</taxon>
        <taxon>Klebsiella pneumoniae complex</taxon>
    </lineage>
</organism>
<keyword id="KW-0067">ATP-binding</keyword>
<keyword id="KW-0436">Ligase</keyword>
<keyword id="KW-0460">Magnesium</keyword>
<keyword id="KW-0479">Metal-binding</keyword>
<keyword id="KW-0547">Nucleotide-binding</keyword>
<keyword id="KW-0816">Tricarboxylic acid cycle</keyword>
<name>SUCC_KLEP3</name>
<accession>B5XZD1</accession>
<evidence type="ECO:0000255" key="1">
    <source>
        <dbReference type="HAMAP-Rule" id="MF_00558"/>
    </source>
</evidence>
<comment type="function">
    <text evidence="1">Succinyl-CoA synthetase functions in the citric acid cycle (TCA), coupling the hydrolysis of succinyl-CoA to the synthesis of either ATP or GTP and thus represents the only step of substrate-level phosphorylation in the TCA. The beta subunit provides nucleotide specificity of the enzyme and binds the substrate succinate, while the binding sites for coenzyme A and phosphate are found in the alpha subunit.</text>
</comment>
<comment type="catalytic activity">
    <reaction evidence="1">
        <text>succinate + ATP + CoA = succinyl-CoA + ADP + phosphate</text>
        <dbReference type="Rhea" id="RHEA:17661"/>
        <dbReference type="ChEBI" id="CHEBI:30031"/>
        <dbReference type="ChEBI" id="CHEBI:30616"/>
        <dbReference type="ChEBI" id="CHEBI:43474"/>
        <dbReference type="ChEBI" id="CHEBI:57287"/>
        <dbReference type="ChEBI" id="CHEBI:57292"/>
        <dbReference type="ChEBI" id="CHEBI:456216"/>
        <dbReference type="EC" id="6.2.1.5"/>
    </reaction>
    <physiologicalReaction direction="right-to-left" evidence="1">
        <dbReference type="Rhea" id="RHEA:17663"/>
    </physiologicalReaction>
</comment>
<comment type="catalytic activity">
    <reaction evidence="1">
        <text>GTP + succinate + CoA = succinyl-CoA + GDP + phosphate</text>
        <dbReference type="Rhea" id="RHEA:22120"/>
        <dbReference type="ChEBI" id="CHEBI:30031"/>
        <dbReference type="ChEBI" id="CHEBI:37565"/>
        <dbReference type="ChEBI" id="CHEBI:43474"/>
        <dbReference type="ChEBI" id="CHEBI:57287"/>
        <dbReference type="ChEBI" id="CHEBI:57292"/>
        <dbReference type="ChEBI" id="CHEBI:58189"/>
    </reaction>
    <physiologicalReaction direction="right-to-left" evidence="1">
        <dbReference type="Rhea" id="RHEA:22122"/>
    </physiologicalReaction>
</comment>
<comment type="cofactor">
    <cofactor evidence="1">
        <name>Mg(2+)</name>
        <dbReference type="ChEBI" id="CHEBI:18420"/>
    </cofactor>
    <text evidence="1">Binds 1 Mg(2+) ion per subunit.</text>
</comment>
<comment type="pathway">
    <text evidence="1">Carbohydrate metabolism; tricarboxylic acid cycle; succinate from succinyl-CoA (ligase route): step 1/1.</text>
</comment>
<comment type="subunit">
    <text evidence="1">Heterotetramer of two alpha and two beta subunits.</text>
</comment>
<comment type="similarity">
    <text evidence="1">Belongs to the succinate/malate CoA ligase beta subunit family.</text>
</comment>
<dbReference type="EC" id="6.2.1.5" evidence="1"/>
<dbReference type="EMBL" id="CP000964">
    <property type="protein sequence ID" value="ACI07839.1"/>
    <property type="molecule type" value="Genomic_DNA"/>
</dbReference>
<dbReference type="SMR" id="B5XZD1"/>
<dbReference type="KEGG" id="kpe:KPK_3836"/>
<dbReference type="HOGENOM" id="CLU_037430_0_2_6"/>
<dbReference type="UniPathway" id="UPA00223">
    <property type="reaction ID" value="UER00999"/>
</dbReference>
<dbReference type="Proteomes" id="UP000001734">
    <property type="component" value="Chromosome"/>
</dbReference>
<dbReference type="GO" id="GO:0005829">
    <property type="term" value="C:cytosol"/>
    <property type="evidence" value="ECO:0007669"/>
    <property type="project" value="TreeGrafter"/>
</dbReference>
<dbReference type="GO" id="GO:0042709">
    <property type="term" value="C:succinate-CoA ligase complex"/>
    <property type="evidence" value="ECO:0007669"/>
    <property type="project" value="TreeGrafter"/>
</dbReference>
<dbReference type="GO" id="GO:0005524">
    <property type="term" value="F:ATP binding"/>
    <property type="evidence" value="ECO:0007669"/>
    <property type="project" value="UniProtKB-UniRule"/>
</dbReference>
<dbReference type="GO" id="GO:0000287">
    <property type="term" value="F:magnesium ion binding"/>
    <property type="evidence" value="ECO:0007669"/>
    <property type="project" value="UniProtKB-UniRule"/>
</dbReference>
<dbReference type="GO" id="GO:0004775">
    <property type="term" value="F:succinate-CoA ligase (ADP-forming) activity"/>
    <property type="evidence" value="ECO:0007669"/>
    <property type="project" value="UniProtKB-UniRule"/>
</dbReference>
<dbReference type="GO" id="GO:0004776">
    <property type="term" value="F:succinate-CoA ligase (GDP-forming) activity"/>
    <property type="evidence" value="ECO:0007669"/>
    <property type="project" value="RHEA"/>
</dbReference>
<dbReference type="GO" id="GO:0006104">
    <property type="term" value="P:succinyl-CoA metabolic process"/>
    <property type="evidence" value="ECO:0007669"/>
    <property type="project" value="TreeGrafter"/>
</dbReference>
<dbReference type="GO" id="GO:0006099">
    <property type="term" value="P:tricarboxylic acid cycle"/>
    <property type="evidence" value="ECO:0007669"/>
    <property type="project" value="UniProtKB-UniRule"/>
</dbReference>
<dbReference type="FunFam" id="3.30.1490.20:FF:000002">
    <property type="entry name" value="Succinate--CoA ligase [ADP-forming] subunit beta"/>
    <property type="match status" value="1"/>
</dbReference>
<dbReference type="FunFam" id="3.30.470.20:FF:000002">
    <property type="entry name" value="Succinate--CoA ligase [ADP-forming] subunit beta"/>
    <property type="match status" value="1"/>
</dbReference>
<dbReference type="FunFam" id="3.40.50.261:FF:000001">
    <property type="entry name" value="Succinate--CoA ligase [ADP-forming] subunit beta"/>
    <property type="match status" value="1"/>
</dbReference>
<dbReference type="Gene3D" id="3.30.1490.20">
    <property type="entry name" value="ATP-grasp fold, A domain"/>
    <property type="match status" value="1"/>
</dbReference>
<dbReference type="Gene3D" id="3.30.470.20">
    <property type="entry name" value="ATP-grasp fold, B domain"/>
    <property type="match status" value="1"/>
</dbReference>
<dbReference type="Gene3D" id="3.40.50.261">
    <property type="entry name" value="Succinyl-CoA synthetase domains"/>
    <property type="match status" value="1"/>
</dbReference>
<dbReference type="HAMAP" id="MF_00558">
    <property type="entry name" value="Succ_CoA_beta"/>
    <property type="match status" value="1"/>
</dbReference>
<dbReference type="InterPro" id="IPR011761">
    <property type="entry name" value="ATP-grasp"/>
</dbReference>
<dbReference type="InterPro" id="IPR013650">
    <property type="entry name" value="ATP-grasp_succ-CoA_synth-type"/>
</dbReference>
<dbReference type="InterPro" id="IPR013815">
    <property type="entry name" value="ATP_grasp_subdomain_1"/>
</dbReference>
<dbReference type="InterPro" id="IPR017866">
    <property type="entry name" value="Succ-CoA_synthase_bsu_CS"/>
</dbReference>
<dbReference type="InterPro" id="IPR005811">
    <property type="entry name" value="SUCC_ACL_C"/>
</dbReference>
<dbReference type="InterPro" id="IPR005809">
    <property type="entry name" value="Succ_CoA_ligase-like_bsu"/>
</dbReference>
<dbReference type="InterPro" id="IPR016102">
    <property type="entry name" value="Succinyl-CoA_synth-like"/>
</dbReference>
<dbReference type="NCBIfam" id="NF001913">
    <property type="entry name" value="PRK00696.1"/>
    <property type="match status" value="1"/>
</dbReference>
<dbReference type="NCBIfam" id="TIGR01016">
    <property type="entry name" value="sucCoAbeta"/>
    <property type="match status" value="1"/>
</dbReference>
<dbReference type="PANTHER" id="PTHR11815:SF10">
    <property type="entry name" value="SUCCINATE--COA LIGASE [GDP-FORMING] SUBUNIT BETA, MITOCHONDRIAL"/>
    <property type="match status" value="1"/>
</dbReference>
<dbReference type="PANTHER" id="PTHR11815">
    <property type="entry name" value="SUCCINYL-COA SYNTHETASE BETA CHAIN"/>
    <property type="match status" value="1"/>
</dbReference>
<dbReference type="Pfam" id="PF08442">
    <property type="entry name" value="ATP-grasp_2"/>
    <property type="match status" value="1"/>
</dbReference>
<dbReference type="Pfam" id="PF00549">
    <property type="entry name" value="Ligase_CoA"/>
    <property type="match status" value="1"/>
</dbReference>
<dbReference type="PIRSF" id="PIRSF001554">
    <property type="entry name" value="SucCS_beta"/>
    <property type="match status" value="1"/>
</dbReference>
<dbReference type="SUPFAM" id="SSF56059">
    <property type="entry name" value="Glutathione synthetase ATP-binding domain-like"/>
    <property type="match status" value="1"/>
</dbReference>
<dbReference type="SUPFAM" id="SSF52210">
    <property type="entry name" value="Succinyl-CoA synthetase domains"/>
    <property type="match status" value="1"/>
</dbReference>
<dbReference type="PROSITE" id="PS50975">
    <property type="entry name" value="ATP_GRASP"/>
    <property type="match status" value="1"/>
</dbReference>
<dbReference type="PROSITE" id="PS01217">
    <property type="entry name" value="SUCCINYL_COA_LIG_3"/>
    <property type="match status" value="1"/>
</dbReference>
<sequence length="388" mass="41503">MNLHEYQAKQLFARYGLPAPVGYACTTPREAEEAASKIGAGPWVVKCQVHAGGRGKAGGVKVVKSKEEIRAFAEHWLGKRLVTYQTDANGQPVNQILVEAATDIDKELYLGAVVDRSSRRVVFMASTEGGVEIEKVAEETPHLIHKIAIDPLAGPMPYQGRELAFKLGLEGKQVQQFTKIFMGLATIFLERDLALIEINPLVITKQGDLICLDGKLGADGNALFRQPDLREMRDQSQEDPREAQAAQWELNYVALDGNIGCMVNGAGLAMGTMDIVKLHGGEPANFLDVGGGATKERVTEAFKIILSDDNVKAVLVNIFGGIVRCDLIADGIIGAVAEVGVNVPVVVRLEGNNAELGAKKLADSGLNIIAAKSLTDAAQQVVAAVEGK</sequence>
<protein>
    <recommendedName>
        <fullName evidence="1">Succinate--CoA ligase [ADP-forming] subunit beta</fullName>
        <ecNumber evidence="1">6.2.1.5</ecNumber>
    </recommendedName>
    <alternativeName>
        <fullName evidence="1">Succinyl-CoA synthetase subunit beta</fullName>
        <shortName evidence="1">SCS-beta</shortName>
    </alternativeName>
</protein>